<keyword id="KW-0963">Cytoplasm</keyword>
<keyword id="KW-0342">GTP-binding</keyword>
<keyword id="KW-0436">Ligase</keyword>
<keyword id="KW-0460">Magnesium</keyword>
<keyword id="KW-0479">Metal-binding</keyword>
<keyword id="KW-0547">Nucleotide-binding</keyword>
<keyword id="KW-0658">Purine biosynthesis</keyword>
<proteinExistence type="inferred from homology"/>
<feature type="chain" id="PRO_0000095232" description="Adenylosuccinate synthetase">
    <location>
        <begin position="1"/>
        <end position="427"/>
    </location>
</feature>
<feature type="active site" description="Proton acceptor" evidence="1">
    <location>
        <position position="13"/>
    </location>
</feature>
<feature type="active site" description="Proton donor" evidence="1">
    <location>
        <position position="41"/>
    </location>
</feature>
<feature type="binding site" evidence="1">
    <location>
        <begin position="12"/>
        <end position="18"/>
    </location>
    <ligand>
        <name>GTP</name>
        <dbReference type="ChEBI" id="CHEBI:37565"/>
    </ligand>
</feature>
<feature type="binding site" description="in other chain" evidence="1">
    <location>
        <begin position="13"/>
        <end position="16"/>
    </location>
    <ligand>
        <name>IMP</name>
        <dbReference type="ChEBI" id="CHEBI:58053"/>
        <note>ligand shared between dimeric partners</note>
    </ligand>
</feature>
<feature type="binding site" evidence="1">
    <location>
        <position position="13"/>
    </location>
    <ligand>
        <name>Mg(2+)</name>
        <dbReference type="ChEBI" id="CHEBI:18420"/>
    </ligand>
</feature>
<feature type="binding site" description="in other chain" evidence="1">
    <location>
        <begin position="38"/>
        <end position="41"/>
    </location>
    <ligand>
        <name>IMP</name>
        <dbReference type="ChEBI" id="CHEBI:58053"/>
        <note>ligand shared between dimeric partners</note>
    </ligand>
</feature>
<feature type="binding site" evidence="1">
    <location>
        <begin position="40"/>
        <end position="42"/>
    </location>
    <ligand>
        <name>GTP</name>
        <dbReference type="ChEBI" id="CHEBI:37565"/>
    </ligand>
</feature>
<feature type="binding site" evidence="1">
    <location>
        <position position="40"/>
    </location>
    <ligand>
        <name>Mg(2+)</name>
        <dbReference type="ChEBI" id="CHEBI:18420"/>
    </ligand>
</feature>
<feature type="binding site" description="in other chain" evidence="1">
    <location>
        <position position="128"/>
    </location>
    <ligand>
        <name>IMP</name>
        <dbReference type="ChEBI" id="CHEBI:58053"/>
        <note>ligand shared between dimeric partners</note>
    </ligand>
</feature>
<feature type="binding site" evidence="1">
    <location>
        <position position="142"/>
    </location>
    <ligand>
        <name>IMP</name>
        <dbReference type="ChEBI" id="CHEBI:58053"/>
        <note>ligand shared between dimeric partners</note>
    </ligand>
</feature>
<feature type="binding site" description="in other chain" evidence="1">
    <location>
        <position position="223"/>
    </location>
    <ligand>
        <name>IMP</name>
        <dbReference type="ChEBI" id="CHEBI:58053"/>
        <note>ligand shared between dimeric partners</note>
    </ligand>
</feature>
<feature type="binding site" description="in other chain" evidence="1">
    <location>
        <position position="238"/>
    </location>
    <ligand>
        <name>IMP</name>
        <dbReference type="ChEBI" id="CHEBI:58053"/>
        <note>ligand shared between dimeric partners</note>
    </ligand>
</feature>
<feature type="binding site" evidence="1">
    <location>
        <begin position="298"/>
        <end position="304"/>
    </location>
    <ligand>
        <name>substrate</name>
    </ligand>
</feature>
<feature type="binding site" description="in other chain" evidence="1">
    <location>
        <position position="302"/>
    </location>
    <ligand>
        <name>IMP</name>
        <dbReference type="ChEBI" id="CHEBI:58053"/>
        <note>ligand shared between dimeric partners</note>
    </ligand>
</feature>
<feature type="binding site" evidence="1">
    <location>
        <position position="304"/>
    </location>
    <ligand>
        <name>GTP</name>
        <dbReference type="ChEBI" id="CHEBI:37565"/>
    </ligand>
</feature>
<feature type="binding site" evidence="1">
    <location>
        <begin position="330"/>
        <end position="332"/>
    </location>
    <ligand>
        <name>GTP</name>
        <dbReference type="ChEBI" id="CHEBI:37565"/>
    </ligand>
</feature>
<feature type="binding site" evidence="1">
    <location>
        <begin position="412"/>
        <end position="414"/>
    </location>
    <ligand>
        <name>GTP</name>
        <dbReference type="ChEBI" id="CHEBI:37565"/>
    </ligand>
</feature>
<sequence length="427" mass="47414">MSSIVVVGTQWGDEGKGKITDFLAEQADVIARFSGGNNAGHTIQFGGETYKLHLVPSGIFYKDKLAVIGNGVVVDPVALLKELDGLNERGISTDNLRISNRAQVILPYHLAQDEYEERRRGDNKIGTTKKGIGPAYVDKAQRIGIRMADLLEKETFERRLKENIEYKNACFKGMFNETCPTFDEIFDEYYAAGQRLKDYVTDTAKILDDANVADEKVLFEGAQGVMLDIDHGTYPFVTSSNPVAGNVTVGTGVGPTSVSKVIGVCKSYTSRVGDGPFPTELFDEDGHHIREVGREYGTTTGRPRRVGWFDSVVLRHSRRVSGITDLSINSIDVLTGLDTVKICTAYELDGEKITEYPANLDQLRRCKPIFEELPGWTEDITGCRSLDELPENARNYLERISELCGVHISIFSVGPDREQTNLLEQLW</sequence>
<evidence type="ECO:0000255" key="1">
    <source>
        <dbReference type="HAMAP-Rule" id="MF_00011"/>
    </source>
</evidence>
<comment type="function">
    <text evidence="1">Plays an important role in the de novo pathway of purine nucleotide biosynthesis. Catalyzes the first committed step in the biosynthesis of AMP from IMP.</text>
</comment>
<comment type="catalytic activity">
    <reaction evidence="1">
        <text>IMP + L-aspartate + GTP = N(6)-(1,2-dicarboxyethyl)-AMP + GDP + phosphate + 2 H(+)</text>
        <dbReference type="Rhea" id="RHEA:15753"/>
        <dbReference type="ChEBI" id="CHEBI:15378"/>
        <dbReference type="ChEBI" id="CHEBI:29991"/>
        <dbReference type="ChEBI" id="CHEBI:37565"/>
        <dbReference type="ChEBI" id="CHEBI:43474"/>
        <dbReference type="ChEBI" id="CHEBI:57567"/>
        <dbReference type="ChEBI" id="CHEBI:58053"/>
        <dbReference type="ChEBI" id="CHEBI:58189"/>
        <dbReference type="EC" id="6.3.4.4"/>
    </reaction>
</comment>
<comment type="cofactor">
    <cofactor evidence="1">
        <name>Mg(2+)</name>
        <dbReference type="ChEBI" id="CHEBI:18420"/>
    </cofactor>
    <text evidence="1">Binds 1 Mg(2+) ion per subunit.</text>
</comment>
<comment type="pathway">
    <text evidence="1">Purine metabolism; AMP biosynthesis via de novo pathway; AMP from IMP: step 1/2.</text>
</comment>
<comment type="subunit">
    <text evidence="1">Homodimer.</text>
</comment>
<comment type="subcellular location">
    <subcellularLocation>
        <location evidence="1">Cytoplasm</location>
    </subcellularLocation>
</comment>
<comment type="similarity">
    <text evidence="1">Belongs to the adenylosuccinate synthetase family.</text>
</comment>
<accession>Q8CQK1</accession>
<name>PURA_STAES</name>
<dbReference type="EC" id="6.3.4.4" evidence="1"/>
<dbReference type="EMBL" id="AE015929">
    <property type="protein sequence ID" value="AAO03613.1"/>
    <property type="molecule type" value="Genomic_DNA"/>
</dbReference>
<dbReference type="RefSeq" id="NP_763571.1">
    <property type="nucleotide sequence ID" value="NC_004461.1"/>
</dbReference>
<dbReference type="RefSeq" id="WP_002470559.1">
    <property type="nucleotide sequence ID" value="NZ_WBME01000012.1"/>
</dbReference>
<dbReference type="SMR" id="Q8CQK1"/>
<dbReference type="KEGG" id="sep:SE_0016"/>
<dbReference type="PATRIC" id="fig|176280.10.peg.17"/>
<dbReference type="eggNOG" id="COG0104">
    <property type="taxonomic scope" value="Bacteria"/>
</dbReference>
<dbReference type="HOGENOM" id="CLU_029848_0_0_9"/>
<dbReference type="OrthoDB" id="9807553at2"/>
<dbReference type="UniPathway" id="UPA00075">
    <property type="reaction ID" value="UER00335"/>
</dbReference>
<dbReference type="Proteomes" id="UP000001411">
    <property type="component" value="Chromosome"/>
</dbReference>
<dbReference type="GO" id="GO:0005737">
    <property type="term" value="C:cytoplasm"/>
    <property type="evidence" value="ECO:0007669"/>
    <property type="project" value="UniProtKB-SubCell"/>
</dbReference>
<dbReference type="GO" id="GO:0004019">
    <property type="term" value="F:adenylosuccinate synthase activity"/>
    <property type="evidence" value="ECO:0007669"/>
    <property type="project" value="UniProtKB-UniRule"/>
</dbReference>
<dbReference type="GO" id="GO:0005525">
    <property type="term" value="F:GTP binding"/>
    <property type="evidence" value="ECO:0007669"/>
    <property type="project" value="UniProtKB-UniRule"/>
</dbReference>
<dbReference type="GO" id="GO:0000287">
    <property type="term" value="F:magnesium ion binding"/>
    <property type="evidence" value="ECO:0007669"/>
    <property type="project" value="UniProtKB-UniRule"/>
</dbReference>
<dbReference type="GO" id="GO:0044208">
    <property type="term" value="P:'de novo' AMP biosynthetic process"/>
    <property type="evidence" value="ECO:0007669"/>
    <property type="project" value="UniProtKB-UniRule"/>
</dbReference>
<dbReference type="GO" id="GO:0046040">
    <property type="term" value="P:IMP metabolic process"/>
    <property type="evidence" value="ECO:0007669"/>
    <property type="project" value="TreeGrafter"/>
</dbReference>
<dbReference type="CDD" id="cd03108">
    <property type="entry name" value="AdSS"/>
    <property type="match status" value="1"/>
</dbReference>
<dbReference type="FunFam" id="1.10.300.10:FF:000001">
    <property type="entry name" value="Adenylosuccinate synthetase"/>
    <property type="match status" value="1"/>
</dbReference>
<dbReference type="FunFam" id="3.90.170.10:FF:000001">
    <property type="entry name" value="Adenylosuccinate synthetase"/>
    <property type="match status" value="1"/>
</dbReference>
<dbReference type="Gene3D" id="3.40.440.10">
    <property type="entry name" value="Adenylosuccinate Synthetase, subunit A, domain 1"/>
    <property type="match status" value="1"/>
</dbReference>
<dbReference type="Gene3D" id="1.10.300.10">
    <property type="entry name" value="Adenylosuccinate Synthetase, subunit A, domain 2"/>
    <property type="match status" value="1"/>
</dbReference>
<dbReference type="Gene3D" id="3.90.170.10">
    <property type="entry name" value="Adenylosuccinate Synthetase, subunit A, domain 3"/>
    <property type="match status" value="1"/>
</dbReference>
<dbReference type="HAMAP" id="MF_00011">
    <property type="entry name" value="Adenylosucc_synth"/>
    <property type="match status" value="1"/>
</dbReference>
<dbReference type="InterPro" id="IPR018220">
    <property type="entry name" value="Adenylosuccin_syn_GTP-bd"/>
</dbReference>
<dbReference type="InterPro" id="IPR033128">
    <property type="entry name" value="Adenylosuccin_syn_Lys_AS"/>
</dbReference>
<dbReference type="InterPro" id="IPR042109">
    <property type="entry name" value="Adenylosuccinate_synth_dom1"/>
</dbReference>
<dbReference type="InterPro" id="IPR042110">
    <property type="entry name" value="Adenylosuccinate_synth_dom2"/>
</dbReference>
<dbReference type="InterPro" id="IPR042111">
    <property type="entry name" value="Adenylosuccinate_synth_dom3"/>
</dbReference>
<dbReference type="InterPro" id="IPR001114">
    <property type="entry name" value="Adenylosuccinate_synthetase"/>
</dbReference>
<dbReference type="InterPro" id="IPR027417">
    <property type="entry name" value="P-loop_NTPase"/>
</dbReference>
<dbReference type="NCBIfam" id="NF002223">
    <property type="entry name" value="PRK01117.1"/>
    <property type="match status" value="1"/>
</dbReference>
<dbReference type="NCBIfam" id="TIGR00184">
    <property type="entry name" value="purA"/>
    <property type="match status" value="1"/>
</dbReference>
<dbReference type="PANTHER" id="PTHR11846">
    <property type="entry name" value="ADENYLOSUCCINATE SYNTHETASE"/>
    <property type="match status" value="1"/>
</dbReference>
<dbReference type="PANTHER" id="PTHR11846:SF0">
    <property type="entry name" value="ADENYLOSUCCINATE SYNTHETASE"/>
    <property type="match status" value="1"/>
</dbReference>
<dbReference type="Pfam" id="PF00709">
    <property type="entry name" value="Adenylsucc_synt"/>
    <property type="match status" value="1"/>
</dbReference>
<dbReference type="SMART" id="SM00788">
    <property type="entry name" value="Adenylsucc_synt"/>
    <property type="match status" value="1"/>
</dbReference>
<dbReference type="SUPFAM" id="SSF52540">
    <property type="entry name" value="P-loop containing nucleoside triphosphate hydrolases"/>
    <property type="match status" value="1"/>
</dbReference>
<dbReference type="PROSITE" id="PS01266">
    <property type="entry name" value="ADENYLOSUCCIN_SYN_1"/>
    <property type="match status" value="1"/>
</dbReference>
<dbReference type="PROSITE" id="PS00513">
    <property type="entry name" value="ADENYLOSUCCIN_SYN_2"/>
    <property type="match status" value="1"/>
</dbReference>
<reference key="1">
    <citation type="journal article" date="2003" name="Mol. Microbiol.">
        <title>Genome-based analysis of virulence genes in a non-biofilm-forming Staphylococcus epidermidis strain (ATCC 12228).</title>
        <authorList>
            <person name="Zhang Y.-Q."/>
            <person name="Ren S.-X."/>
            <person name="Li H.-L."/>
            <person name="Wang Y.-X."/>
            <person name="Fu G."/>
            <person name="Yang J."/>
            <person name="Qin Z.-Q."/>
            <person name="Miao Y.-G."/>
            <person name="Wang W.-Y."/>
            <person name="Chen R.-S."/>
            <person name="Shen Y."/>
            <person name="Chen Z."/>
            <person name="Yuan Z.-H."/>
            <person name="Zhao G.-P."/>
            <person name="Qu D."/>
            <person name="Danchin A."/>
            <person name="Wen Y.-M."/>
        </authorList>
    </citation>
    <scope>NUCLEOTIDE SEQUENCE [LARGE SCALE GENOMIC DNA]</scope>
    <source>
        <strain>ATCC 12228 / FDA PCI 1200</strain>
    </source>
</reference>
<protein>
    <recommendedName>
        <fullName evidence="1">Adenylosuccinate synthetase</fullName>
        <shortName evidence="1">AMPSase</shortName>
        <shortName evidence="1">AdSS</shortName>
        <ecNumber evidence="1">6.3.4.4</ecNumber>
    </recommendedName>
    <alternativeName>
        <fullName evidence="1">IMP--aspartate ligase</fullName>
    </alternativeName>
</protein>
<gene>
    <name evidence="1" type="primary">purA</name>
    <name type="ordered locus">SE_0016</name>
</gene>
<organism>
    <name type="scientific">Staphylococcus epidermidis (strain ATCC 12228 / FDA PCI 1200)</name>
    <dbReference type="NCBI Taxonomy" id="176280"/>
    <lineage>
        <taxon>Bacteria</taxon>
        <taxon>Bacillati</taxon>
        <taxon>Bacillota</taxon>
        <taxon>Bacilli</taxon>
        <taxon>Bacillales</taxon>
        <taxon>Staphylococcaceae</taxon>
        <taxon>Staphylococcus</taxon>
    </lineage>
</organism>